<keyword id="KW-0007">Acetylation</keyword>
<keyword id="KW-0013">ADP-ribosylation</keyword>
<keyword id="KW-0053">Apoptosis</keyword>
<keyword id="KW-0963">Cytoplasm</keyword>
<keyword id="KW-0206">Cytoskeleton</keyword>
<keyword id="KW-0903">Direct protein sequencing</keyword>
<keyword id="KW-0324">Glycolysis</keyword>
<keyword id="KW-0391">Immunity</keyword>
<keyword id="KW-0399">Innate immunity</keyword>
<keyword id="KW-1017">Isopeptide bond</keyword>
<keyword id="KW-0488">Methylation</keyword>
<keyword id="KW-0520">NAD</keyword>
<keyword id="KW-0539">Nucleus</keyword>
<keyword id="KW-0560">Oxidoreductase</keyword>
<keyword id="KW-0597">Phosphoprotein</keyword>
<keyword id="KW-0702">S-nitrosylation</keyword>
<keyword id="KW-0808">Transferase</keyword>
<keyword id="KW-0810">Translation regulation</keyword>
<keyword id="KW-0832">Ubl conjugation</keyword>
<organism>
    <name type="scientific">Jaculus orientalis</name>
    <name type="common">Greater Egyptian jerboa</name>
    <dbReference type="NCBI Taxonomy" id="48868"/>
    <lineage>
        <taxon>Eukaryota</taxon>
        <taxon>Metazoa</taxon>
        <taxon>Chordata</taxon>
        <taxon>Craniata</taxon>
        <taxon>Vertebrata</taxon>
        <taxon>Euteleostomi</taxon>
        <taxon>Mammalia</taxon>
        <taxon>Eutheria</taxon>
        <taxon>Euarchontoglires</taxon>
        <taxon>Glires</taxon>
        <taxon>Rodentia</taxon>
        <taxon>Myomorpha</taxon>
        <taxon>Dipodoidea</taxon>
        <taxon>Dipodidae</taxon>
        <taxon>Dipodinae</taxon>
        <taxon>Jaculus</taxon>
    </lineage>
</organism>
<proteinExistence type="evidence at protein level"/>
<reference key="1">
    <citation type="journal article" date="1996" name="Gene">
        <title>Occurrence of a differential expression of the glyceraldehyde-3-phosphate dehydrogenase gene in muscle and liver from euthermic and induced hibernating jerboa (Jaculus orientalis).</title>
        <authorList>
            <person name="Soukri A."/>
            <person name="Valverde F."/>
            <person name="Hafid N."/>
            <person name="Elkebbaj M.S."/>
            <person name="Serrano A."/>
        </authorList>
    </citation>
    <scope>PROTEIN SEQUENCE OF 1-54</scope>
    <scope>NUCLEOTIDE SEQUENCE [MRNA] OF 25-363</scope>
    <source>
        <tissue>Skeletal muscle</tissue>
    </source>
</reference>
<reference key="2">
    <citation type="journal article" date="1996" name="Biochim. Biophys. Acta">
        <title>Evidence for a posttranslational covalent modification of liver glyceraldehyde-3-phosphate dehydrogenase in hibernating jerboa (Jaculus orientalis).</title>
        <authorList>
            <person name="Soukri A."/>
            <person name="Hafid N."/>
            <person name="Valverde F."/>
            <person name="Elkebbaj M.S."/>
            <person name="Serrano A."/>
        </authorList>
    </citation>
    <scope>PROTEIN SEQUENCE OF 2-25</scope>
    <source>
        <tissue>Liver</tissue>
    </source>
</reference>
<accession>P80534</accession>
<accession>P80447</accession>
<accession>Q64418</accession>
<comment type="function">
    <text evidence="2 3">Has both glyceraldehyde-3-phosphate dehydrogenase and nitrosylase activities, thereby playing a role in glycolysis and nuclear functions, respectively. Glyceraldehyde-3-phosphate dehydrogenase is a key enzyme in glycolysis that catalyzes the first step of the pathway by converting D-glyceraldehyde 3-phosphate (G3P) into 3-phospho-D-glyceroyl phosphate (By similarity). Modulates the organization and assembly of the cytoskeleton. Facilitates the CHP1-dependent microtubule and membrane associations through its ability to stimulate the binding of CHP1 to microtubules (By similarity). Component of the GAIT (gamma interferon-activated inhibitor of translation) complex which mediates interferon-gamma-induced transcript-selective translation inhibition in inflammation processes. Upon interferon-gamma treatment assembles into the GAIT complex which binds to stem loop-containing GAIT elements in the 3'-UTR of diverse inflammatory mRNAs (such as ceruplasmin) and suppresses their translation. Also plays a role in innate immunity by promoting TNF-induced NF-kappa-B activation and type I interferon production, via interaction with TRAF2 and TRAF3, respectively (By similarity). Participates in nuclear events including transcription, RNA transport, DNA replication and apoptosis. Nuclear functions are probably due to the nitrosylase activity that mediates cysteine S-nitrosylation of nuclear target proteins such as SIRT1, HDAC2 and PRKDC (By similarity).</text>
</comment>
<comment type="catalytic activity">
    <reaction evidence="2 7">
        <text>D-glyceraldehyde 3-phosphate + phosphate + NAD(+) = (2R)-3-phospho-glyceroyl phosphate + NADH + H(+)</text>
        <dbReference type="Rhea" id="RHEA:10300"/>
        <dbReference type="ChEBI" id="CHEBI:15378"/>
        <dbReference type="ChEBI" id="CHEBI:43474"/>
        <dbReference type="ChEBI" id="CHEBI:57540"/>
        <dbReference type="ChEBI" id="CHEBI:57604"/>
        <dbReference type="ChEBI" id="CHEBI:57945"/>
        <dbReference type="ChEBI" id="CHEBI:59776"/>
        <dbReference type="EC" id="1.2.1.12"/>
    </reaction>
</comment>
<comment type="catalytic activity">
    <reaction evidence="3">
        <text>S-nitroso-L-cysteinyl-[GAPDH] + L-cysteinyl-[protein] = L-cysteinyl-[GAPDH] + S-nitroso-L-cysteinyl-[protein]</text>
        <dbReference type="Rhea" id="RHEA:66684"/>
        <dbReference type="Rhea" id="RHEA-COMP:10131"/>
        <dbReference type="Rhea" id="RHEA-COMP:17089"/>
        <dbReference type="Rhea" id="RHEA-COMP:17090"/>
        <dbReference type="Rhea" id="RHEA-COMP:17091"/>
        <dbReference type="ChEBI" id="CHEBI:29950"/>
        <dbReference type="ChEBI" id="CHEBI:149494"/>
    </reaction>
    <physiologicalReaction direction="left-to-right" evidence="3">
        <dbReference type="Rhea" id="RHEA:66685"/>
    </physiologicalReaction>
</comment>
<comment type="activity regulation">
    <text evidence="3">Glyceraldehyde-3-phosphate dehydrogenase activity is inhibited by fumarate, via the formation of S-(2-succinyl)cysteine residues.</text>
</comment>
<comment type="pathway">
    <text>Carbohydrate degradation; glycolysis; pyruvate from D-glyceraldehyde 3-phosphate: step 1/5.</text>
</comment>
<comment type="subunit">
    <text evidence="2 3 4">Homotetramer (By similarity). Interacts with TPPP; the interaction is direct (By similarity). Interacts (when S-nitrosylated) with SIAH1; leading to nuclear translocation. Interacts with RILPL1/GOSPEL, leading to prevent the interaction between GAPDH and SIAH1 and prevent nuclear translocation. Interacts with CHP1; the interaction increases the binding of CHP1 with microtubules. Associates with microtubules (By similarity). Interacts with EIF1AD, USP25, PRKCI and WARS1. Interacts with phosphorylated RPL13A; inhibited by oxidatively-modified low-densitity lipoprotein (LDL(ox)). Component of the GAIT complex. Interacts with FKBP6; leading to inhibit GAPDH catalytic activity. Interacts with TRAF2, promoting TRAF2 ubiquitination. Interacts with TRAF3, promoting TRAF3 ubiquitination (By similarity).</text>
</comment>
<comment type="subcellular location">
    <subcellularLocation>
        <location evidence="3">Cytoplasm</location>
        <location evidence="3">Cytosol</location>
    </subcellularLocation>
    <subcellularLocation>
        <location evidence="3">Cytoplasm</location>
        <location evidence="3">Cytoskeleton</location>
    </subcellularLocation>
    <subcellularLocation>
        <location evidence="3">Nucleus</location>
    </subcellularLocation>
    <text evidence="3">Translocates to the nucleus following S-nitrosylation and interaction with SIAH1, which contains a nuclear localization signal. Colocalizes with CHP1 to small punctate structures along the microtubules tracks.</text>
</comment>
<comment type="PTM">
    <text evidence="2">ISGylated.</text>
</comment>
<comment type="PTM">
    <text evidence="2 3">S-nitrosylation of Cys-180 leads to interaction with SIAH1, followed by translocation to the nucleus S-nitrosylation of Cys-275 is induced by interferon-gamma and LDL(ox) implicating the iNOS-S100A8/9 transnitrosylase complex and seems to prevent interaction with phosphorylated RPL13A and to interfere with GAIT complex activity (By similarity).</text>
</comment>
<comment type="PTM">
    <text evidence="5">Sulfhydration at Cys-180 increases catalytic activity.</text>
</comment>
<comment type="similarity">
    <text evidence="8">Belongs to the glyceraldehyde-3-phosphate dehydrogenase family.</text>
</comment>
<sequence length="363" mass="39413">MVKVGVNGFGRIGRLVTRAAFNSGKVDIVAINDPFIDLNYMVYMFKYDSTHGKFKVDIVAINDPFIDLNYMVYMFKYDSTHGKFKGTVKAENGKLVINGHAITIFQERDPSKIKWGDAGAEYVVESTGVFTTMEKAGAHLKGGAKRVIISAPSRDAPMFVMGVNHEKYDKSLKIVSNASCTTNCLAPLAKVIHDNFGIVEGLMTTVHAITATQKTVDGPSAKLWRDGAGAAQNIIPASTGAAKAVGKVIPELNGKLTGMAFRVPTANVSVVDLTCRLEKPAKYDDIKRVVKQACDGPLKGMLGYTEHQVVSSDFNGDSHSSTFDAGAGIALNDHFVKLVSWYDNEFGYSNRVVDLMVHMASKE</sequence>
<feature type="chain" id="PRO_0000145487" description="Glyceraldehyde-3-phosphate dehydrogenase, muscle">
    <location>
        <begin position="1"/>
        <end position="363"/>
    </location>
</feature>
<feature type="initiator methionine" description="Removed; alternate" evidence="4">
    <location>
        <position position="1"/>
    </location>
</feature>
<feature type="chain" id="PRO_0000421780" description="Glyceraldehyde-3-phosphate dehydrogenase, muscle, N-terminally processed">
    <location>
        <begin position="2"/>
        <end position="363"/>
    </location>
</feature>
<feature type="region of interest" description="Interaction with WARS" evidence="1">
    <location>
        <begin position="1"/>
        <end position="176"/>
    </location>
</feature>
<feature type="active site" description="Nucleophile" evidence="7">
    <location>
        <position position="180"/>
    </location>
</feature>
<feature type="binding site" evidence="2">
    <location>
        <begin position="11"/>
        <end position="12"/>
    </location>
    <ligand>
        <name>NAD(+)</name>
        <dbReference type="ChEBI" id="CHEBI:57540"/>
    </ligand>
</feature>
<feature type="binding site" evidence="2">
    <location>
        <position position="33"/>
    </location>
    <ligand>
        <name>NAD(+)</name>
        <dbReference type="ChEBI" id="CHEBI:57540"/>
    </ligand>
</feature>
<feature type="binding site" evidence="2">
    <location>
        <position position="108"/>
    </location>
    <ligand>
        <name>NAD(+)</name>
        <dbReference type="ChEBI" id="CHEBI:57540"/>
    </ligand>
</feature>
<feature type="binding site" evidence="2">
    <location>
        <position position="150"/>
    </location>
    <ligand>
        <name>NAD(+)</name>
        <dbReference type="ChEBI" id="CHEBI:57540"/>
    </ligand>
</feature>
<feature type="binding site" evidence="6">
    <location>
        <begin position="179"/>
        <end position="181"/>
    </location>
    <ligand>
        <name>D-glyceraldehyde 3-phosphate</name>
        <dbReference type="ChEBI" id="CHEBI:59776"/>
    </ligand>
</feature>
<feature type="binding site" evidence="6">
    <location>
        <position position="210"/>
    </location>
    <ligand>
        <name>D-glyceraldehyde 3-phosphate</name>
        <dbReference type="ChEBI" id="CHEBI:59776"/>
    </ligand>
</feature>
<feature type="binding site" evidence="6">
    <location>
        <begin position="239"/>
        <end position="240"/>
    </location>
    <ligand>
        <name>D-glyceraldehyde 3-phosphate</name>
        <dbReference type="ChEBI" id="CHEBI:59776"/>
    </ligand>
</feature>
<feature type="binding site" evidence="6">
    <location>
        <position position="262"/>
    </location>
    <ligand>
        <name>D-glyceraldehyde 3-phosphate</name>
        <dbReference type="ChEBI" id="CHEBI:59776"/>
    </ligand>
</feature>
<feature type="binding site" evidence="2">
    <location>
        <position position="344"/>
    </location>
    <ligand>
        <name>NAD(+)</name>
        <dbReference type="ChEBI" id="CHEBI:57540"/>
    </ligand>
</feature>
<feature type="site" description="Activates thiol group during catalysis" evidence="2">
    <location>
        <position position="207"/>
    </location>
</feature>
<feature type="modified residue" description="N6,N6-dimethyllysine" evidence="2">
    <location>
        <position position="3"/>
    </location>
</feature>
<feature type="modified residue" description="Deamidated asparagine" evidence="2">
    <location>
        <position position="7"/>
    </location>
</feature>
<feature type="modified residue" description="Phosphotyrosine" evidence="2">
    <location>
        <position position="70"/>
    </location>
</feature>
<feature type="modified residue" description="N6-acetyllysine" evidence="2">
    <location>
        <position position="89"/>
    </location>
</feature>
<feature type="modified residue" description="Deamidated asparagine" evidence="2">
    <location>
        <position position="92"/>
    </location>
</feature>
<feature type="modified residue" description="N6,N6-dimethyllysine" evidence="2">
    <location>
        <position position="94"/>
    </location>
</feature>
<feature type="modified residue" description="Deamidated asparagine" evidence="2">
    <location>
        <position position="98"/>
    </location>
</feature>
<feature type="modified residue" description="Phosphothreonine" evidence="2">
    <location>
        <position position="103"/>
    </location>
</feature>
<feature type="modified residue" description="Phosphoserine" evidence="2">
    <location>
        <position position="150"/>
    </location>
</feature>
<feature type="modified residue" description="Phosphoserine" evidence="2">
    <location>
        <position position="176"/>
    </location>
</feature>
<feature type="modified residue" description="Deamidated asparagine" evidence="2">
    <location>
        <position position="177"/>
    </location>
</feature>
<feature type="modified residue" description="Phosphoserine" evidence="2">
    <location>
        <position position="179"/>
    </location>
</feature>
<feature type="modified residue" description="ADP-ribosylcysteine; by autocatalysis; in irreversibly inhibited form" evidence="3">
    <location>
        <position position="180"/>
    </location>
</feature>
<feature type="modified residue" description="Cysteine persulfide" evidence="5">
    <location>
        <position position="180"/>
    </location>
</feature>
<feature type="modified residue" description="S-(2-succinyl)cysteine" evidence="3">
    <location>
        <position position="180"/>
    </location>
</feature>
<feature type="modified residue" description="S-nitrosocysteine; in reversibly inhibited form" evidence="3">
    <location>
        <position position="180"/>
    </location>
</feature>
<feature type="modified residue" description="Phosphothreonine" evidence="2">
    <location>
        <position position="181"/>
    </location>
</feature>
<feature type="modified residue" description="Deamidated asparagine" evidence="2">
    <location>
        <position position="183"/>
    </location>
</feature>
<feature type="modified residue" description="Phosphothreonine" evidence="2">
    <location>
        <position position="205"/>
    </location>
</feature>
<feature type="modified residue" description="Phosphothreonine" evidence="2">
    <location>
        <position position="210"/>
    </location>
</feature>
<feature type="modified residue" description="Phosphothreonine" evidence="2">
    <location>
        <position position="212"/>
    </location>
</feature>
<feature type="modified residue" description="N6,N6-dimethyllysine; alternate" evidence="2">
    <location>
        <position position="222"/>
    </location>
</feature>
<feature type="modified residue" description="N6-acetyllysine; alternate" evidence="2">
    <location>
        <position position="222"/>
    </location>
</feature>
<feature type="modified residue" description="N6-malonyllysine; alternate" evidence="2">
    <location>
        <position position="222"/>
    </location>
</feature>
<feature type="modified residue" description="Phosphothreonine" evidence="2">
    <location>
        <position position="239"/>
    </location>
</feature>
<feature type="modified residue" description="N6,N6-dimethyllysine; alternate" evidence="2">
    <location>
        <position position="243"/>
    </location>
</feature>
<feature type="modified residue" description="N6-malonyllysine; alternate" evidence="2">
    <location>
        <position position="243"/>
    </location>
</feature>
<feature type="modified residue" description="N6-acetyllysine" evidence="2">
    <location>
        <position position="247"/>
    </location>
</feature>
<feature type="modified residue" description="Deamidated asparagine" evidence="2">
    <location>
        <position position="253"/>
    </location>
</feature>
<feature type="modified residue" description="N6,N6-dimethyllysine; alternate" evidence="2">
    <location>
        <position position="255"/>
    </location>
</feature>
<feature type="modified residue" description="N6-acetyllysine; alternate" evidence="2">
    <location>
        <position position="255"/>
    </location>
</feature>
<feature type="modified residue" description="Phosphothreonine" evidence="2">
    <location>
        <position position="257"/>
    </location>
</feature>
<feature type="modified residue" description="Phosphothreonine" evidence="2">
    <location>
        <position position="265"/>
    </location>
</feature>
<feature type="modified residue" description="Phosphoserine" evidence="2">
    <location>
        <position position="269"/>
    </location>
</feature>
<feature type="modified residue" description="S-(2-succinyl)cysteine" evidence="3">
    <location>
        <position position="275"/>
    </location>
</feature>
<feature type="modified residue" description="S-nitrosocysteine" evidence="2">
    <location>
        <position position="275"/>
    </location>
</feature>
<feature type="modified residue" description="N6-acetyllysine" evidence="2">
    <location>
        <position position="282"/>
    </location>
</feature>
<feature type="modified residue" description="N6,N6-dimethyllysine" evidence="2">
    <location>
        <position position="291"/>
    </location>
</feature>
<feature type="modified residue" description="Phosphoserine" evidence="2">
    <location>
        <position position="340"/>
    </location>
</feature>
<feature type="modified residue" description="Deamidated asparagine" evidence="2">
    <location>
        <position position="344"/>
    </location>
</feature>
<feature type="modified residue" description="Phosphoserine" evidence="2">
    <location>
        <position position="361"/>
    </location>
</feature>
<feature type="modified residue" description="N6,N6-dimethyllysine" evidence="2">
    <location>
        <position position="362"/>
    </location>
</feature>
<feature type="cross-link" description="Glycyl lysine isopeptide (Lys-Gly) (interchain with G-Cter in SUMO2)" evidence="2">
    <location>
        <position position="214"/>
    </location>
</feature>
<feature type="sequence variant" description="In hibernating adult liver isoform.">
    <original>N</original>
    <variation>D</variation>
    <location>
        <position position="7"/>
    </location>
</feature>
<dbReference type="EC" id="1.2.1.12" evidence="2"/>
<dbReference type="EC" id="2.6.99.-" evidence="3"/>
<dbReference type="EMBL" id="X87226">
    <property type="protein sequence ID" value="CAA60678.1"/>
    <property type="molecule type" value="mRNA"/>
</dbReference>
<dbReference type="PIR" id="JC5370">
    <property type="entry name" value="JC5370"/>
</dbReference>
<dbReference type="SMR" id="P80534"/>
<dbReference type="SABIO-RK" id="P80534"/>
<dbReference type="UniPathway" id="UPA00109">
    <property type="reaction ID" value="UER00184"/>
</dbReference>
<dbReference type="GO" id="GO:0005856">
    <property type="term" value="C:cytoskeleton"/>
    <property type="evidence" value="ECO:0007669"/>
    <property type="project" value="UniProtKB-SubCell"/>
</dbReference>
<dbReference type="GO" id="GO:0005829">
    <property type="term" value="C:cytosol"/>
    <property type="evidence" value="ECO:0000250"/>
    <property type="project" value="UniProtKB"/>
</dbReference>
<dbReference type="GO" id="GO:0097452">
    <property type="term" value="C:GAIT complex"/>
    <property type="evidence" value="ECO:0000250"/>
    <property type="project" value="UniProtKB"/>
</dbReference>
<dbReference type="GO" id="GO:0005634">
    <property type="term" value="C:nucleus"/>
    <property type="evidence" value="ECO:0000250"/>
    <property type="project" value="UniProtKB"/>
</dbReference>
<dbReference type="GO" id="GO:0004365">
    <property type="term" value="F:glyceraldehyde-3-phosphate dehydrogenase (NAD+) (phosphorylating) activity"/>
    <property type="evidence" value="ECO:0000250"/>
    <property type="project" value="UniProtKB"/>
</dbReference>
<dbReference type="GO" id="GO:0008017">
    <property type="term" value="F:microtubule binding"/>
    <property type="evidence" value="ECO:0000250"/>
    <property type="project" value="UniProtKB"/>
</dbReference>
<dbReference type="GO" id="GO:0051287">
    <property type="term" value="F:NAD binding"/>
    <property type="evidence" value="ECO:0007669"/>
    <property type="project" value="InterPro"/>
</dbReference>
<dbReference type="GO" id="GO:0050661">
    <property type="term" value="F:NADP binding"/>
    <property type="evidence" value="ECO:0007669"/>
    <property type="project" value="InterPro"/>
</dbReference>
<dbReference type="GO" id="GO:0035605">
    <property type="term" value="F:peptidyl-cysteine S-nitrosylase activity"/>
    <property type="evidence" value="ECO:0000250"/>
    <property type="project" value="UniProtKB"/>
</dbReference>
<dbReference type="GO" id="GO:0006006">
    <property type="term" value="P:glucose metabolic process"/>
    <property type="evidence" value="ECO:0007669"/>
    <property type="project" value="InterPro"/>
</dbReference>
<dbReference type="GO" id="GO:0006096">
    <property type="term" value="P:glycolytic process"/>
    <property type="evidence" value="ECO:0007669"/>
    <property type="project" value="UniProtKB-UniPathway"/>
</dbReference>
<dbReference type="GO" id="GO:0045087">
    <property type="term" value="P:innate immune response"/>
    <property type="evidence" value="ECO:0007669"/>
    <property type="project" value="UniProtKB-KW"/>
</dbReference>
<dbReference type="GO" id="GO:0000226">
    <property type="term" value="P:microtubule cytoskeleton organization"/>
    <property type="evidence" value="ECO:0000250"/>
    <property type="project" value="UniProtKB"/>
</dbReference>
<dbReference type="GO" id="GO:0051402">
    <property type="term" value="P:neuron apoptotic process"/>
    <property type="evidence" value="ECO:0000250"/>
    <property type="project" value="UniProtKB"/>
</dbReference>
<dbReference type="GO" id="GO:0035606">
    <property type="term" value="P:peptidyl-cysteine S-trans-nitrosylation"/>
    <property type="evidence" value="ECO:0000250"/>
    <property type="project" value="UniProtKB"/>
</dbReference>
<dbReference type="GO" id="GO:0043123">
    <property type="term" value="P:positive regulation of canonical NF-kappaB signal transduction"/>
    <property type="evidence" value="ECO:0000250"/>
    <property type="project" value="UniProtKB"/>
</dbReference>
<dbReference type="GO" id="GO:0032481">
    <property type="term" value="P:positive regulation of type I interferon production"/>
    <property type="evidence" value="ECO:0000250"/>
    <property type="project" value="UniProtKB"/>
</dbReference>
<dbReference type="GO" id="GO:0050821">
    <property type="term" value="P:protein stabilization"/>
    <property type="evidence" value="ECO:0000250"/>
    <property type="project" value="UniProtKB"/>
</dbReference>
<dbReference type="GO" id="GO:0006417">
    <property type="term" value="P:regulation of translation"/>
    <property type="evidence" value="ECO:0007669"/>
    <property type="project" value="UniProtKB-KW"/>
</dbReference>
<dbReference type="CDD" id="cd18126">
    <property type="entry name" value="GAPDH_I_C"/>
    <property type="match status" value="1"/>
</dbReference>
<dbReference type="CDD" id="cd05214">
    <property type="entry name" value="GAPDH_I_N"/>
    <property type="match status" value="1"/>
</dbReference>
<dbReference type="FunFam" id="3.30.360.10:FF:000001">
    <property type="entry name" value="Glyceraldehyde-3-phosphate dehydrogenase"/>
    <property type="match status" value="1"/>
</dbReference>
<dbReference type="FunFam" id="3.40.50.720:FF:000319">
    <property type="entry name" value="Glyceraldehyde-3-phosphate dehydrogenase"/>
    <property type="match status" value="1"/>
</dbReference>
<dbReference type="Gene3D" id="3.30.360.10">
    <property type="entry name" value="Dihydrodipicolinate Reductase, domain 2"/>
    <property type="match status" value="1"/>
</dbReference>
<dbReference type="Gene3D" id="3.40.50.720">
    <property type="entry name" value="NAD(P)-binding Rossmann-like Domain"/>
    <property type="match status" value="2"/>
</dbReference>
<dbReference type="InterPro" id="IPR020831">
    <property type="entry name" value="GlycerAld/Erythrose_P_DH"/>
</dbReference>
<dbReference type="InterPro" id="IPR020830">
    <property type="entry name" value="GlycerAld_3-P_DH_AS"/>
</dbReference>
<dbReference type="InterPro" id="IPR020829">
    <property type="entry name" value="GlycerAld_3-P_DH_cat"/>
</dbReference>
<dbReference type="InterPro" id="IPR020828">
    <property type="entry name" value="GlycerAld_3-P_DH_NAD(P)-bd"/>
</dbReference>
<dbReference type="InterPro" id="IPR006424">
    <property type="entry name" value="Glyceraldehyde-3-P_DH_1"/>
</dbReference>
<dbReference type="InterPro" id="IPR036291">
    <property type="entry name" value="NAD(P)-bd_dom_sf"/>
</dbReference>
<dbReference type="NCBIfam" id="TIGR01534">
    <property type="entry name" value="GAPDH-I"/>
    <property type="match status" value="1"/>
</dbReference>
<dbReference type="PANTHER" id="PTHR10836">
    <property type="entry name" value="GLYCERALDEHYDE 3-PHOSPHATE DEHYDROGENASE"/>
    <property type="match status" value="1"/>
</dbReference>
<dbReference type="PANTHER" id="PTHR10836:SF111">
    <property type="entry name" value="GLYCERALDEHYDE-3-PHOSPHATE DEHYDROGENASE"/>
    <property type="match status" value="1"/>
</dbReference>
<dbReference type="Pfam" id="PF02800">
    <property type="entry name" value="Gp_dh_C"/>
    <property type="match status" value="1"/>
</dbReference>
<dbReference type="Pfam" id="PF00044">
    <property type="entry name" value="Gp_dh_N"/>
    <property type="match status" value="1"/>
</dbReference>
<dbReference type="PIRSF" id="PIRSF000149">
    <property type="entry name" value="GAP_DH"/>
    <property type="match status" value="1"/>
</dbReference>
<dbReference type="PRINTS" id="PR00078">
    <property type="entry name" value="G3PDHDRGNASE"/>
</dbReference>
<dbReference type="SMART" id="SM00846">
    <property type="entry name" value="Gp_dh_N"/>
    <property type="match status" value="1"/>
</dbReference>
<dbReference type="SUPFAM" id="SSF55347">
    <property type="entry name" value="Glyceraldehyde-3-phosphate dehydrogenase-like, C-terminal domain"/>
    <property type="match status" value="1"/>
</dbReference>
<dbReference type="SUPFAM" id="SSF51735">
    <property type="entry name" value="NAD(P)-binding Rossmann-fold domains"/>
    <property type="match status" value="2"/>
</dbReference>
<dbReference type="PROSITE" id="PS00071">
    <property type="entry name" value="GAPDH"/>
    <property type="match status" value="1"/>
</dbReference>
<name>G3P_JACOR</name>
<evidence type="ECO:0000250" key="1"/>
<evidence type="ECO:0000250" key="2">
    <source>
        <dbReference type="UniProtKB" id="P04406"/>
    </source>
</evidence>
<evidence type="ECO:0000250" key="3">
    <source>
        <dbReference type="UniProtKB" id="P04797"/>
    </source>
</evidence>
<evidence type="ECO:0000250" key="4">
    <source>
        <dbReference type="UniProtKB" id="P10096"/>
    </source>
</evidence>
<evidence type="ECO:0000250" key="5">
    <source>
        <dbReference type="UniProtKB" id="P16858"/>
    </source>
</evidence>
<evidence type="ECO:0000250" key="6">
    <source>
        <dbReference type="UniProtKB" id="P22513"/>
    </source>
</evidence>
<evidence type="ECO:0000255" key="7">
    <source>
        <dbReference type="PROSITE-ProRule" id="PRU10009"/>
    </source>
</evidence>
<evidence type="ECO:0000305" key="8"/>
<protein>
    <recommendedName>
        <fullName>Glyceraldehyde-3-phosphate dehydrogenase, muscle</fullName>
        <shortName>GAPDH</shortName>
        <ecNumber evidence="2">1.2.1.12</ecNumber>
    </recommendedName>
    <alternativeName>
        <fullName evidence="8">Peptidyl-cysteine S-nitrosylase GAPDH</fullName>
        <ecNumber evidence="3">2.6.99.-</ecNumber>
    </alternativeName>
    <component>
        <recommendedName>
            <fullName>Glyceraldehyde-3-phosphate dehydrogenase, muscle, N-terminally processed</fullName>
        </recommendedName>
    </component>
</protein>